<sequence>MQAILSSWFIQGMIKATSDMWHKGWDERNGGNISLRLLAEEVEPYRRDFYQQPRKVELTQPAPELANSWFLVTGSGKFFRNVELNPAENLVLLQVSNDGMAYHIHWGLTQGGLPTSELAAHFQSHIVRMQVSGGTNRVIMHCHATNLIALSYVQKLENASFTRLLWEGSTECLVVFPDGIGIVPWMVPGTDGIGTQTAEQMREHSLVLWPFHGIFGSGPTLDDAFGLIDTAEKSAEIMVKVLSMGGKKQTISREQLIALAARFDVTPMAAALDA</sequence>
<proteinExistence type="inferred from homology"/>
<gene>
    <name evidence="1" type="primary">rhaD</name>
    <name type="ordered locus">YPDSF_3644</name>
</gene>
<protein>
    <recommendedName>
        <fullName evidence="1">Rhamnulose-1-phosphate aldolase</fullName>
        <ecNumber evidence="1">4.1.2.19</ecNumber>
    </recommendedName>
</protein>
<dbReference type="EC" id="4.1.2.19" evidence="1"/>
<dbReference type="EMBL" id="CP000668">
    <property type="protein sequence ID" value="ABP41994.1"/>
    <property type="molecule type" value="Genomic_DNA"/>
</dbReference>
<dbReference type="RefSeq" id="WP_002209103.1">
    <property type="nucleotide sequence ID" value="NZ_CP009715.1"/>
</dbReference>
<dbReference type="SMR" id="A4TRT2"/>
<dbReference type="GeneID" id="57974277"/>
<dbReference type="KEGG" id="ypp:YPDSF_3644"/>
<dbReference type="PATRIC" id="fig|386656.14.peg.306"/>
<dbReference type="UniPathway" id="UPA00541">
    <property type="reaction ID" value="UER00603"/>
</dbReference>
<dbReference type="GO" id="GO:0005829">
    <property type="term" value="C:cytosol"/>
    <property type="evidence" value="ECO:0007669"/>
    <property type="project" value="TreeGrafter"/>
</dbReference>
<dbReference type="GO" id="GO:0046872">
    <property type="term" value="F:metal ion binding"/>
    <property type="evidence" value="ECO:0007669"/>
    <property type="project" value="UniProtKB-KW"/>
</dbReference>
<dbReference type="GO" id="GO:0008994">
    <property type="term" value="F:rhamnulose-1-phosphate aldolase activity"/>
    <property type="evidence" value="ECO:0007669"/>
    <property type="project" value="UniProtKB-UniRule"/>
</dbReference>
<dbReference type="GO" id="GO:0019323">
    <property type="term" value="P:pentose catabolic process"/>
    <property type="evidence" value="ECO:0007669"/>
    <property type="project" value="TreeGrafter"/>
</dbReference>
<dbReference type="GO" id="GO:0019301">
    <property type="term" value="P:rhamnose catabolic process"/>
    <property type="evidence" value="ECO:0007669"/>
    <property type="project" value="UniProtKB-UniRule"/>
</dbReference>
<dbReference type="CDD" id="cd00398">
    <property type="entry name" value="Aldolase_II"/>
    <property type="match status" value="1"/>
</dbReference>
<dbReference type="FunFam" id="3.40.225.10:FF:000006">
    <property type="entry name" value="Rhamnulose-1-phosphate aldolase"/>
    <property type="match status" value="1"/>
</dbReference>
<dbReference type="Gene3D" id="3.40.225.10">
    <property type="entry name" value="Class II aldolase/adducin N-terminal domain"/>
    <property type="match status" value="1"/>
</dbReference>
<dbReference type="HAMAP" id="MF_00770">
    <property type="entry name" value="RhaD"/>
    <property type="match status" value="1"/>
</dbReference>
<dbReference type="InterPro" id="IPR050197">
    <property type="entry name" value="Aldolase_class_II_sugar_metab"/>
</dbReference>
<dbReference type="InterPro" id="IPR001303">
    <property type="entry name" value="Aldolase_II/adducin_N"/>
</dbReference>
<dbReference type="InterPro" id="IPR036409">
    <property type="entry name" value="Aldolase_II/adducin_N_sf"/>
</dbReference>
<dbReference type="InterPro" id="IPR013447">
    <property type="entry name" value="Rhamnulose-1-P_Aldolase"/>
</dbReference>
<dbReference type="NCBIfam" id="NF002963">
    <property type="entry name" value="PRK03634.1"/>
    <property type="match status" value="1"/>
</dbReference>
<dbReference type="NCBIfam" id="TIGR02624">
    <property type="entry name" value="rhamnu_1P_ald"/>
    <property type="match status" value="1"/>
</dbReference>
<dbReference type="PANTHER" id="PTHR22789">
    <property type="entry name" value="FUCULOSE PHOSPHATE ALDOLASE"/>
    <property type="match status" value="1"/>
</dbReference>
<dbReference type="PANTHER" id="PTHR22789:SF16">
    <property type="entry name" value="RHAMNULOSE-1-PHOSPHATE ALDOLASE"/>
    <property type="match status" value="1"/>
</dbReference>
<dbReference type="Pfam" id="PF00596">
    <property type="entry name" value="Aldolase_II"/>
    <property type="match status" value="1"/>
</dbReference>
<dbReference type="SMART" id="SM01007">
    <property type="entry name" value="Aldolase_II"/>
    <property type="match status" value="1"/>
</dbReference>
<dbReference type="SUPFAM" id="SSF53639">
    <property type="entry name" value="AraD/HMP-PK domain-like"/>
    <property type="match status" value="1"/>
</dbReference>
<organism>
    <name type="scientific">Yersinia pestis (strain Pestoides F)</name>
    <dbReference type="NCBI Taxonomy" id="386656"/>
    <lineage>
        <taxon>Bacteria</taxon>
        <taxon>Pseudomonadati</taxon>
        <taxon>Pseudomonadota</taxon>
        <taxon>Gammaproteobacteria</taxon>
        <taxon>Enterobacterales</taxon>
        <taxon>Yersiniaceae</taxon>
        <taxon>Yersinia</taxon>
    </lineage>
</organism>
<keyword id="KW-0963">Cytoplasm</keyword>
<keyword id="KW-0456">Lyase</keyword>
<keyword id="KW-0479">Metal-binding</keyword>
<keyword id="KW-0684">Rhamnose metabolism</keyword>
<keyword id="KW-0862">Zinc</keyword>
<feature type="chain" id="PRO_1000017348" description="Rhamnulose-1-phosphate aldolase">
    <location>
        <begin position="1"/>
        <end position="274"/>
    </location>
</feature>
<feature type="active site" evidence="1">
    <location>
        <position position="117"/>
    </location>
</feature>
<feature type="binding site" evidence="1">
    <location>
        <position position="141"/>
    </location>
    <ligand>
        <name>Zn(2+)</name>
        <dbReference type="ChEBI" id="CHEBI:29105"/>
    </ligand>
</feature>
<feature type="binding site" evidence="1">
    <location>
        <position position="143"/>
    </location>
    <ligand>
        <name>Zn(2+)</name>
        <dbReference type="ChEBI" id="CHEBI:29105"/>
    </ligand>
</feature>
<feature type="binding site" evidence="1">
    <location>
        <position position="212"/>
    </location>
    <ligand>
        <name>Zn(2+)</name>
        <dbReference type="ChEBI" id="CHEBI:29105"/>
    </ligand>
</feature>
<name>RHAD_YERPP</name>
<accession>A4TRT2</accession>
<comment type="function">
    <text evidence="1">Catalyzes the reversible cleavage of L-rhamnulose-1-phosphate to dihydroxyacetone phosphate (DHAP) and L-lactaldehyde.</text>
</comment>
<comment type="catalytic activity">
    <reaction evidence="1">
        <text>L-rhamnulose 1-phosphate = (S)-lactaldehyde + dihydroxyacetone phosphate</text>
        <dbReference type="Rhea" id="RHEA:19689"/>
        <dbReference type="ChEBI" id="CHEBI:18041"/>
        <dbReference type="ChEBI" id="CHEBI:57642"/>
        <dbReference type="ChEBI" id="CHEBI:58313"/>
        <dbReference type="EC" id="4.1.2.19"/>
    </reaction>
</comment>
<comment type="cofactor">
    <cofactor evidence="1">
        <name>Zn(2+)</name>
        <dbReference type="ChEBI" id="CHEBI:29105"/>
    </cofactor>
    <text evidence="1">Binds 1 zinc ion per subunit.</text>
</comment>
<comment type="pathway">
    <text evidence="1">Carbohydrate degradation; L-rhamnose degradation; glycerone phosphate from L-rhamnose: step 3/3.</text>
</comment>
<comment type="subunit">
    <text evidence="1">Homotetramer.</text>
</comment>
<comment type="subcellular location">
    <subcellularLocation>
        <location evidence="1">Cytoplasm</location>
    </subcellularLocation>
</comment>
<comment type="similarity">
    <text evidence="1">Belongs to the aldolase class II family. RhaD subfamily.</text>
</comment>
<reference key="1">
    <citation type="submission" date="2007-02" db="EMBL/GenBank/DDBJ databases">
        <title>Complete sequence of chromosome of Yersinia pestis Pestoides F.</title>
        <authorList>
            <consortium name="US DOE Joint Genome Institute"/>
            <person name="Copeland A."/>
            <person name="Lucas S."/>
            <person name="Lapidus A."/>
            <person name="Barry K."/>
            <person name="Detter J.C."/>
            <person name="Glavina del Rio T."/>
            <person name="Hammon N."/>
            <person name="Israni S."/>
            <person name="Dalin E."/>
            <person name="Tice H."/>
            <person name="Pitluck S."/>
            <person name="Di Bartolo G."/>
            <person name="Chain P."/>
            <person name="Malfatti S."/>
            <person name="Shin M."/>
            <person name="Vergez L."/>
            <person name="Schmutz J."/>
            <person name="Larimer F."/>
            <person name="Land M."/>
            <person name="Hauser L."/>
            <person name="Worsham P."/>
            <person name="Chu M."/>
            <person name="Bearden S."/>
            <person name="Garcia E."/>
            <person name="Richardson P."/>
        </authorList>
    </citation>
    <scope>NUCLEOTIDE SEQUENCE [LARGE SCALE GENOMIC DNA]</scope>
    <source>
        <strain>Pestoides F</strain>
    </source>
</reference>
<evidence type="ECO:0000255" key="1">
    <source>
        <dbReference type="HAMAP-Rule" id="MF_00770"/>
    </source>
</evidence>